<gene>
    <name evidence="1" type="primary">mnmC</name>
    <name type="ordered locus">Shew_2411</name>
</gene>
<comment type="function">
    <text evidence="1">Catalyzes the last two steps in the biosynthesis of 5-methylaminomethyl-2-thiouridine (mnm(5)s(2)U) at the wobble position (U34) in tRNA. Catalyzes the FAD-dependent demodification of cmnm(5)s(2)U34 to nm(5)s(2)U34, followed by the transfer of a methyl group from S-adenosyl-L-methionine to nm(5)s(2)U34, to form mnm(5)s(2)U34.</text>
</comment>
<comment type="catalytic activity">
    <reaction evidence="1">
        <text>5-aminomethyl-2-thiouridine(34) in tRNA + S-adenosyl-L-methionine = 5-methylaminomethyl-2-thiouridine(34) in tRNA + S-adenosyl-L-homocysteine + H(+)</text>
        <dbReference type="Rhea" id="RHEA:19569"/>
        <dbReference type="Rhea" id="RHEA-COMP:10195"/>
        <dbReference type="Rhea" id="RHEA-COMP:10197"/>
        <dbReference type="ChEBI" id="CHEBI:15378"/>
        <dbReference type="ChEBI" id="CHEBI:57856"/>
        <dbReference type="ChEBI" id="CHEBI:59789"/>
        <dbReference type="ChEBI" id="CHEBI:74454"/>
        <dbReference type="ChEBI" id="CHEBI:74455"/>
        <dbReference type="EC" id="2.1.1.61"/>
    </reaction>
</comment>
<comment type="cofactor">
    <cofactor evidence="1">
        <name>FAD</name>
        <dbReference type="ChEBI" id="CHEBI:57692"/>
    </cofactor>
</comment>
<comment type="subcellular location">
    <subcellularLocation>
        <location evidence="1">Cytoplasm</location>
    </subcellularLocation>
</comment>
<comment type="similarity">
    <text evidence="1">In the N-terminal section; belongs to the methyltransferase superfamily. tRNA (mnm(5)s(2)U34)-methyltransferase family.</text>
</comment>
<comment type="similarity">
    <text evidence="1">In the C-terminal section; belongs to the DAO family.</text>
</comment>
<evidence type="ECO:0000255" key="1">
    <source>
        <dbReference type="HAMAP-Rule" id="MF_01102"/>
    </source>
</evidence>
<organism>
    <name type="scientific">Shewanella loihica (strain ATCC BAA-1088 / PV-4)</name>
    <dbReference type="NCBI Taxonomy" id="323850"/>
    <lineage>
        <taxon>Bacteria</taxon>
        <taxon>Pseudomonadati</taxon>
        <taxon>Pseudomonadota</taxon>
        <taxon>Gammaproteobacteria</taxon>
        <taxon>Alteromonadales</taxon>
        <taxon>Shewanellaceae</taxon>
        <taxon>Shewanella</taxon>
    </lineage>
</organism>
<sequence length="686" mass="75269">MPNIPLRVNSLATEHPNNAQNSDKMPTFDAIFSHLSAIASHNSHQIIALLPSSDANWPAALIAERLTQAGSKQHLQKQHLHLHLFAQHQASWLKALAESETLASPAKEQIKAICDARVSGSHRLKLVNARLIIDIHLGDPLTQLKDLVSPSLASQAIQGWLANTQATDEALIWQMARLSQDNAEFLLLENNDVNLDKTSNNANTNLLTQLIIKAGFTCYRLNLSLKDDQLVTLAEKPSLASLEIAMVERRALRRQQLDKFAFNPLTQGREGETAIIGGGVASANLALSLAERGKKVSFFCMDKAPGEQASGNKQGAIYPLLTPEHGSLSHYFLLGYLFSRQRIKQLLESGHEIPHDFCGVLQTGHDERSHKRLTKIINAQPWAESIARPVDALQATALAGVTIEHQGIYYPLAGWVSPQAFTRAAISQAERLGKQTSHYQCQITAIRFENQQWYLSAIQDGQKVEFGPYANLVLANGRHLTDFAQTDHLPISGFRGQVSHIPERAPLKDLKTVLCAHGYLTPAHDKLHCTGASYVKDASNLDYSAVEQVENLDKIRTSYGGEWTKAVDITGHSARVGVRMVTRDHAPMMGCAPDFEAISATYISHQQTKKSTKESAKCWQTTSAPVHQGLFILGGLGSRGLTSGPLAAEILAAQLCGELLPATQDILALLNPNRMWMRKLIKGKAL</sequence>
<reference key="1">
    <citation type="submission" date="2007-03" db="EMBL/GenBank/DDBJ databases">
        <title>Complete sequence of Shewanella loihica PV-4.</title>
        <authorList>
            <consortium name="US DOE Joint Genome Institute"/>
            <person name="Copeland A."/>
            <person name="Lucas S."/>
            <person name="Lapidus A."/>
            <person name="Barry K."/>
            <person name="Detter J.C."/>
            <person name="Glavina del Rio T."/>
            <person name="Hammon N."/>
            <person name="Israni S."/>
            <person name="Dalin E."/>
            <person name="Tice H."/>
            <person name="Pitluck S."/>
            <person name="Chain P."/>
            <person name="Malfatti S."/>
            <person name="Shin M."/>
            <person name="Vergez L."/>
            <person name="Schmutz J."/>
            <person name="Larimer F."/>
            <person name="Land M."/>
            <person name="Hauser L."/>
            <person name="Kyrpides N."/>
            <person name="Mikhailova N."/>
            <person name="Romine M.F."/>
            <person name="Serres G."/>
            <person name="Fredrickson J."/>
            <person name="Tiedje J."/>
            <person name="Richardson P."/>
        </authorList>
    </citation>
    <scope>NUCLEOTIDE SEQUENCE [LARGE SCALE GENOMIC DNA]</scope>
    <source>
        <strain>ATCC BAA-1088 / PV-4</strain>
    </source>
</reference>
<keyword id="KW-0963">Cytoplasm</keyword>
<keyword id="KW-0274">FAD</keyword>
<keyword id="KW-0285">Flavoprotein</keyword>
<keyword id="KW-0489">Methyltransferase</keyword>
<keyword id="KW-0511">Multifunctional enzyme</keyword>
<keyword id="KW-0560">Oxidoreductase</keyword>
<keyword id="KW-1185">Reference proteome</keyword>
<keyword id="KW-0949">S-adenosyl-L-methionine</keyword>
<keyword id="KW-0808">Transferase</keyword>
<keyword id="KW-0819">tRNA processing</keyword>
<feature type="chain" id="PRO_0000348029" description="tRNA 5-methylaminomethyl-2-thiouridine biosynthesis bifunctional protein MnmC">
    <location>
        <begin position="1"/>
        <end position="686"/>
    </location>
</feature>
<feature type="region of interest" description="tRNA (mnm(5)s(2)U34)-methyltransferase">
    <location>
        <begin position="1"/>
        <end position="258"/>
    </location>
</feature>
<feature type="region of interest" description="FAD-dependent cmnm(5)s(2)U34 oxidoreductase">
    <location>
        <begin position="276"/>
        <end position="686"/>
    </location>
</feature>
<name>MNMC_SHELP</name>
<protein>
    <recommendedName>
        <fullName evidence="1">tRNA 5-methylaminomethyl-2-thiouridine biosynthesis bifunctional protein MnmC</fullName>
        <shortName evidence="1">tRNA mnm(5)s(2)U biosynthesis bifunctional protein</shortName>
    </recommendedName>
    <domain>
        <recommendedName>
            <fullName evidence="1">tRNA (mnm(5)s(2)U34)-methyltransferase</fullName>
            <ecNumber evidence="1">2.1.1.61</ecNumber>
        </recommendedName>
    </domain>
    <domain>
        <recommendedName>
            <fullName evidence="1">FAD-dependent cmnm(5)s(2)U34 oxidoreductase</fullName>
            <ecNumber evidence="1">1.5.-.-</ecNumber>
        </recommendedName>
    </domain>
</protein>
<proteinExistence type="inferred from homology"/>
<dbReference type="EC" id="2.1.1.61" evidence="1"/>
<dbReference type="EC" id="1.5.-.-" evidence="1"/>
<dbReference type="EMBL" id="CP000606">
    <property type="protein sequence ID" value="ABO24277.1"/>
    <property type="molecule type" value="Genomic_DNA"/>
</dbReference>
<dbReference type="SMR" id="A3QFM9"/>
<dbReference type="STRING" id="323850.Shew_2411"/>
<dbReference type="KEGG" id="slo:Shew_2411"/>
<dbReference type="eggNOG" id="COG0665">
    <property type="taxonomic scope" value="Bacteria"/>
</dbReference>
<dbReference type="HOGENOM" id="CLU_022427_2_1_6"/>
<dbReference type="OrthoDB" id="9786494at2"/>
<dbReference type="Proteomes" id="UP000001558">
    <property type="component" value="Chromosome"/>
</dbReference>
<dbReference type="GO" id="GO:0005737">
    <property type="term" value="C:cytoplasm"/>
    <property type="evidence" value="ECO:0007669"/>
    <property type="project" value="UniProtKB-SubCell"/>
</dbReference>
<dbReference type="GO" id="GO:0050660">
    <property type="term" value="F:flavin adenine dinucleotide binding"/>
    <property type="evidence" value="ECO:0007669"/>
    <property type="project" value="UniProtKB-UniRule"/>
</dbReference>
<dbReference type="GO" id="GO:0016645">
    <property type="term" value="F:oxidoreductase activity, acting on the CH-NH group of donors"/>
    <property type="evidence" value="ECO:0007669"/>
    <property type="project" value="InterPro"/>
</dbReference>
<dbReference type="GO" id="GO:0004808">
    <property type="term" value="F:tRNA (5-methylaminomethyl-2-thiouridylate)(34)-methyltransferase activity"/>
    <property type="evidence" value="ECO:0007669"/>
    <property type="project" value="UniProtKB-EC"/>
</dbReference>
<dbReference type="GO" id="GO:0032259">
    <property type="term" value="P:methylation"/>
    <property type="evidence" value="ECO:0007669"/>
    <property type="project" value="UniProtKB-KW"/>
</dbReference>
<dbReference type="GO" id="GO:0002098">
    <property type="term" value="P:tRNA wobble uridine modification"/>
    <property type="evidence" value="ECO:0007669"/>
    <property type="project" value="TreeGrafter"/>
</dbReference>
<dbReference type="Gene3D" id="3.30.9.10">
    <property type="entry name" value="D-Amino Acid Oxidase, subunit A, domain 2"/>
    <property type="match status" value="1"/>
</dbReference>
<dbReference type="Gene3D" id="3.50.50.60">
    <property type="entry name" value="FAD/NAD(P)-binding domain"/>
    <property type="match status" value="1"/>
</dbReference>
<dbReference type="HAMAP" id="MF_01102">
    <property type="entry name" value="MnmC"/>
    <property type="match status" value="1"/>
</dbReference>
<dbReference type="InterPro" id="IPR006076">
    <property type="entry name" value="FAD-dep_OxRdtase"/>
</dbReference>
<dbReference type="InterPro" id="IPR036188">
    <property type="entry name" value="FAD/NAD-bd_sf"/>
</dbReference>
<dbReference type="InterPro" id="IPR023032">
    <property type="entry name" value="tRNA_MAMT_biosynth_bifunc_MnmC"/>
</dbReference>
<dbReference type="InterPro" id="IPR017610">
    <property type="entry name" value="tRNA_S-uridine_synth_MnmC_C"/>
</dbReference>
<dbReference type="NCBIfam" id="TIGR03197">
    <property type="entry name" value="MnmC_Cterm"/>
    <property type="match status" value="1"/>
</dbReference>
<dbReference type="PANTHER" id="PTHR13847">
    <property type="entry name" value="SARCOSINE DEHYDROGENASE-RELATED"/>
    <property type="match status" value="1"/>
</dbReference>
<dbReference type="PANTHER" id="PTHR13847:SF283">
    <property type="entry name" value="TRNA 5-METHYLAMINOMETHYL-2-THIOURIDINE BIOSYNTHESIS BIFUNCTIONAL PROTEIN MNMC"/>
    <property type="match status" value="1"/>
</dbReference>
<dbReference type="Pfam" id="PF01266">
    <property type="entry name" value="DAO"/>
    <property type="match status" value="1"/>
</dbReference>
<dbReference type="SUPFAM" id="SSF51905">
    <property type="entry name" value="FAD/NAD(P)-binding domain"/>
    <property type="match status" value="1"/>
</dbReference>
<accession>A3QFM9</accession>